<proteinExistence type="inferred from homology"/>
<sequence length="833" mass="94717">MTRSPFRRLVFGTLRRLLYLWVRSETINQSSFTLNLDRSRPVFYALQSPSISDLAVIDTECRKAGLPRPVLSVAVGNLIEPAAFFYLTPSPDWLGRQDKRGAPPTLERVVAAVSQNPGEDAQIIPVSVFWGQSPDRESSAWKLLFADSWAVTGRLRRLVSILILGRKTRVQFSAPIHMRELVGENKGYELTLRMTQRLLRVHFRNLKSAVIGPDVSHRRTVVKGLLDEPLVKQAIIEEAEREHITQEKARERALSYGNEIASDYTYSVIRFMEVVLSWFWNKIYDGIKVSHIEGVQEVAPGHEVIYVPCHRSHIDYLLLSYLLFRNGLTPPHIAAGINLNMPVVGGLLRRGGAFFMRRTFKGNPLYTAVFTEYLHTLFIKGFPVEYFVEGGRSRTGRMLQPKTGMLAITLRSFLRNSRMPIVFIPVYIGYERVLEGRTYLGELRGATKKKESIFDIFKVIGALKQRFGQVSVNFGAPIKLAEFLDGEQPDWREQQLDPQFRPEWLSETTHRLGERVAQHLNEAAAVNPMNLVAVALLSTQRLALDDQAMERVLDLYLTLLRAVPYSPHTTLPEGDGRSLIEHVKGMDLLAEQKDALGKILYLNEQNAVLMTYYRNNVLHIFALPSLLASFFQSSSRMTREQILRYTRALYPFLQSELFIRWPLNELDDVVDQWLAAFVEQGLLRFKKDAYVRPEPSSREFVLLTLLSRAIAQTLQRFYMAIALLLNSGQNTLSPEQLEDLCTVMAQRLSILHGLNAPEFFDKSLFRHFIQTLLDLGVLRKDSAGKLSYHPMLGELAEGAAKRVLPAEIRLSIRQVALHSNEEEQDVGTDQGAA</sequence>
<reference key="1">
    <citation type="journal article" date="2005" name="Proc. Natl. Acad. Sci. U.S.A.">
        <title>Comparison of the complete genome sequences of Pseudomonas syringae pv. syringae B728a and pv. tomato DC3000.</title>
        <authorList>
            <person name="Feil H."/>
            <person name="Feil W.S."/>
            <person name="Chain P."/>
            <person name="Larimer F."/>
            <person name="Dibartolo G."/>
            <person name="Copeland A."/>
            <person name="Lykidis A."/>
            <person name="Trong S."/>
            <person name="Nolan M."/>
            <person name="Goltsman E."/>
            <person name="Thiel J."/>
            <person name="Malfatti S."/>
            <person name="Loper J.E."/>
            <person name="Lapidus A."/>
            <person name="Detter J.C."/>
            <person name="Land M."/>
            <person name="Richardson P.M."/>
            <person name="Kyrpides N.C."/>
            <person name="Ivanova N."/>
            <person name="Lindow S.E."/>
        </authorList>
    </citation>
    <scope>NUCLEOTIDE SEQUENCE [LARGE SCALE GENOMIC DNA]</scope>
    <source>
        <strain>B728a</strain>
    </source>
</reference>
<evidence type="ECO:0000255" key="1">
    <source>
        <dbReference type="HAMAP-Rule" id="MF_00393"/>
    </source>
</evidence>
<gene>
    <name evidence="1" type="primary">plsB</name>
    <name type="ordered locus">Psyr_1328</name>
</gene>
<feature type="chain" id="PRO_1000049450" description="Glycerol-3-phosphate acyltransferase">
    <location>
        <begin position="1"/>
        <end position="833"/>
    </location>
</feature>
<feature type="short sequence motif" description="HXXXXD motif">
    <location>
        <begin position="309"/>
        <end position="314"/>
    </location>
</feature>
<accession>Q4ZWU3</accession>
<dbReference type="EC" id="2.3.1.15" evidence="1"/>
<dbReference type="EMBL" id="CP000075">
    <property type="protein sequence ID" value="AAY36379.1"/>
    <property type="molecule type" value="Genomic_DNA"/>
</dbReference>
<dbReference type="RefSeq" id="WP_011266965.1">
    <property type="nucleotide sequence ID" value="NC_007005.1"/>
</dbReference>
<dbReference type="RefSeq" id="YP_234417.1">
    <property type="nucleotide sequence ID" value="NC_007005.1"/>
</dbReference>
<dbReference type="SMR" id="Q4ZWU3"/>
<dbReference type="STRING" id="205918.Psyr_1328"/>
<dbReference type="KEGG" id="psb:Psyr_1328"/>
<dbReference type="PATRIC" id="fig|205918.7.peg.1361"/>
<dbReference type="eggNOG" id="COG2937">
    <property type="taxonomic scope" value="Bacteria"/>
</dbReference>
<dbReference type="HOGENOM" id="CLU_015407_0_0_6"/>
<dbReference type="OrthoDB" id="335193at2"/>
<dbReference type="UniPathway" id="UPA00557">
    <property type="reaction ID" value="UER00612"/>
</dbReference>
<dbReference type="Proteomes" id="UP000000426">
    <property type="component" value="Chromosome"/>
</dbReference>
<dbReference type="GO" id="GO:0005886">
    <property type="term" value="C:plasma membrane"/>
    <property type="evidence" value="ECO:0007669"/>
    <property type="project" value="UniProtKB-SubCell"/>
</dbReference>
<dbReference type="GO" id="GO:0004366">
    <property type="term" value="F:glycerol-3-phosphate O-acyltransferase activity"/>
    <property type="evidence" value="ECO:0007669"/>
    <property type="project" value="UniProtKB-UniRule"/>
</dbReference>
<dbReference type="GO" id="GO:0016024">
    <property type="term" value="P:CDP-diacylglycerol biosynthetic process"/>
    <property type="evidence" value="ECO:0007669"/>
    <property type="project" value="UniProtKB-UniRule"/>
</dbReference>
<dbReference type="GO" id="GO:0006631">
    <property type="term" value="P:fatty acid metabolic process"/>
    <property type="evidence" value="ECO:0007669"/>
    <property type="project" value="TreeGrafter"/>
</dbReference>
<dbReference type="CDD" id="cd07993">
    <property type="entry name" value="LPLAT_DHAPAT-like"/>
    <property type="match status" value="1"/>
</dbReference>
<dbReference type="HAMAP" id="MF_00393">
    <property type="entry name" value="Glyc3P_acyltrans"/>
    <property type="match status" value="1"/>
</dbReference>
<dbReference type="InterPro" id="IPR022284">
    <property type="entry name" value="GPAT/DHAPAT"/>
</dbReference>
<dbReference type="InterPro" id="IPR045520">
    <property type="entry name" value="GPAT/DHAPAT_C"/>
</dbReference>
<dbReference type="InterPro" id="IPR041728">
    <property type="entry name" value="GPAT/DHAPAT_LPLAT"/>
</dbReference>
<dbReference type="InterPro" id="IPR028354">
    <property type="entry name" value="GPAT_PlsB"/>
</dbReference>
<dbReference type="InterPro" id="IPR002123">
    <property type="entry name" value="Plipid/glycerol_acylTrfase"/>
</dbReference>
<dbReference type="NCBIfam" id="TIGR03703">
    <property type="entry name" value="plsB"/>
    <property type="match status" value="1"/>
</dbReference>
<dbReference type="NCBIfam" id="NF003441">
    <property type="entry name" value="PRK04974.1"/>
    <property type="match status" value="1"/>
</dbReference>
<dbReference type="PANTHER" id="PTHR12563:SF17">
    <property type="entry name" value="DIHYDROXYACETONE PHOSPHATE ACYLTRANSFERASE"/>
    <property type="match status" value="1"/>
</dbReference>
<dbReference type="PANTHER" id="PTHR12563">
    <property type="entry name" value="GLYCEROL-3-PHOSPHATE ACYLTRANSFERASE"/>
    <property type="match status" value="1"/>
</dbReference>
<dbReference type="Pfam" id="PF01553">
    <property type="entry name" value="Acyltransferase"/>
    <property type="match status" value="1"/>
</dbReference>
<dbReference type="Pfam" id="PF19277">
    <property type="entry name" value="GPAT_C"/>
    <property type="match status" value="1"/>
</dbReference>
<dbReference type="PIRSF" id="PIRSF500064">
    <property type="entry name" value="GPAT"/>
    <property type="match status" value="1"/>
</dbReference>
<dbReference type="PIRSF" id="PIRSF000437">
    <property type="entry name" value="GPAT_DHAPAT"/>
    <property type="match status" value="1"/>
</dbReference>
<dbReference type="SMART" id="SM00563">
    <property type="entry name" value="PlsC"/>
    <property type="match status" value="1"/>
</dbReference>
<dbReference type="SUPFAM" id="SSF69593">
    <property type="entry name" value="Glycerol-3-phosphate (1)-acyltransferase"/>
    <property type="match status" value="1"/>
</dbReference>
<protein>
    <recommendedName>
        <fullName evidence="1">Glycerol-3-phosphate acyltransferase</fullName>
        <shortName evidence="1">GPAT</shortName>
        <ecNumber evidence="1">2.3.1.15</ecNumber>
    </recommendedName>
</protein>
<comment type="catalytic activity">
    <reaction evidence="1">
        <text>sn-glycerol 3-phosphate + an acyl-CoA = a 1-acyl-sn-glycero-3-phosphate + CoA</text>
        <dbReference type="Rhea" id="RHEA:15325"/>
        <dbReference type="ChEBI" id="CHEBI:57287"/>
        <dbReference type="ChEBI" id="CHEBI:57597"/>
        <dbReference type="ChEBI" id="CHEBI:57970"/>
        <dbReference type="ChEBI" id="CHEBI:58342"/>
        <dbReference type="EC" id="2.3.1.15"/>
    </reaction>
</comment>
<comment type="pathway">
    <text evidence="1">Phospholipid metabolism; CDP-diacylglycerol biosynthesis; CDP-diacylglycerol from sn-glycerol 3-phosphate: step 1/3.</text>
</comment>
<comment type="subcellular location">
    <subcellularLocation>
        <location evidence="1">Cell inner membrane</location>
        <topology evidence="1">Peripheral membrane protein</topology>
        <orientation evidence="1">Cytoplasmic side</orientation>
    </subcellularLocation>
</comment>
<comment type="domain">
    <text evidence="1">The HXXXXD motif is essential for acyltransferase activity and may constitute the binding site for the phosphate moiety of the glycerol-3-phosphate.</text>
</comment>
<comment type="similarity">
    <text evidence="1">Belongs to the GPAT/DAPAT family.</text>
</comment>
<organism>
    <name type="scientific">Pseudomonas syringae pv. syringae (strain B728a)</name>
    <dbReference type="NCBI Taxonomy" id="205918"/>
    <lineage>
        <taxon>Bacteria</taxon>
        <taxon>Pseudomonadati</taxon>
        <taxon>Pseudomonadota</taxon>
        <taxon>Gammaproteobacteria</taxon>
        <taxon>Pseudomonadales</taxon>
        <taxon>Pseudomonadaceae</taxon>
        <taxon>Pseudomonas</taxon>
        <taxon>Pseudomonas syringae</taxon>
    </lineage>
</organism>
<name>PLSB_PSEU2</name>
<keyword id="KW-0012">Acyltransferase</keyword>
<keyword id="KW-0997">Cell inner membrane</keyword>
<keyword id="KW-1003">Cell membrane</keyword>
<keyword id="KW-0444">Lipid biosynthesis</keyword>
<keyword id="KW-0443">Lipid metabolism</keyword>
<keyword id="KW-0472">Membrane</keyword>
<keyword id="KW-0594">Phospholipid biosynthesis</keyword>
<keyword id="KW-1208">Phospholipid metabolism</keyword>
<keyword id="KW-0808">Transferase</keyword>